<gene>
    <name type="primary">yrzI</name>
    <name type="ordered locus">BSU27190</name>
</gene>
<reference key="1">
    <citation type="journal article" date="1997" name="Nature">
        <title>The complete genome sequence of the Gram-positive bacterium Bacillus subtilis.</title>
        <authorList>
            <person name="Kunst F."/>
            <person name="Ogasawara N."/>
            <person name="Moszer I."/>
            <person name="Albertini A.M."/>
            <person name="Alloni G."/>
            <person name="Azevedo V."/>
            <person name="Bertero M.G."/>
            <person name="Bessieres P."/>
            <person name="Bolotin A."/>
            <person name="Borchert S."/>
            <person name="Borriss R."/>
            <person name="Boursier L."/>
            <person name="Brans A."/>
            <person name="Braun M."/>
            <person name="Brignell S.C."/>
            <person name="Bron S."/>
            <person name="Brouillet S."/>
            <person name="Bruschi C.V."/>
            <person name="Caldwell B."/>
            <person name="Capuano V."/>
            <person name="Carter N.M."/>
            <person name="Choi S.-K."/>
            <person name="Codani J.-J."/>
            <person name="Connerton I.F."/>
            <person name="Cummings N.J."/>
            <person name="Daniel R.A."/>
            <person name="Denizot F."/>
            <person name="Devine K.M."/>
            <person name="Duesterhoeft A."/>
            <person name="Ehrlich S.D."/>
            <person name="Emmerson P.T."/>
            <person name="Entian K.-D."/>
            <person name="Errington J."/>
            <person name="Fabret C."/>
            <person name="Ferrari E."/>
            <person name="Foulger D."/>
            <person name="Fritz C."/>
            <person name="Fujita M."/>
            <person name="Fujita Y."/>
            <person name="Fuma S."/>
            <person name="Galizzi A."/>
            <person name="Galleron N."/>
            <person name="Ghim S.-Y."/>
            <person name="Glaser P."/>
            <person name="Goffeau A."/>
            <person name="Golightly E.J."/>
            <person name="Grandi G."/>
            <person name="Guiseppi G."/>
            <person name="Guy B.J."/>
            <person name="Haga K."/>
            <person name="Haiech J."/>
            <person name="Harwood C.R."/>
            <person name="Henaut A."/>
            <person name="Hilbert H."/>
            <person name="Holsappel S."/>
            <person name="Hosono S."/>
            <person name="Hullo M.-F."/>
            <person name="Itaya M."/>
            <person name="Jones L.-M."/>
            <person name="Joris B."/>
            <person name="Karamata D."/>
            <person name="Kasahara Y."/>
            <person name="Klaerr-Blanchard M."/>
            <person name="Klein C."/>
            <person name="Kobayashi Y."/>
            <person name="Koetter P."/>
            <person name="Koningstein G."/>
            <person name="Krogh S."/>
            <person name="Kumano M."/>
            <person name="Kurita K."/>
            <person name="Lapidus A."/>
            <person name="Lardinois S."/>
            <person name="Lauber J."/>
            <person name="Lazarevic V."/>
            <person name="Lee S.-M."/>
            <person name="Levine A."/>
            <person name="Liu H."/>
            <person name="Masuda S."/>
            <person name="Mauel C."/>
            <person name="Medigue C."/>
            <person name="Medina N."/>
            <person name="Mellado R.P."/>
            <person name="Mizuno M."/>
            <person name="Moestl D."/>
            <person name="Nakai S."/>
            <person name="Noback M."/>
            <person name="Noone D."/>
            <person name="O'Reilly M."/>
            <person name="Ogawa K."/>
            <person name="Ogiwara A."/>
            <person name="Oudega B."/>
            <person name="Park S.-H."/>
            <person name="Parro V."/>
            <person name="Pohl T.M."/>
            <person name="Portetelle D."/>
            <person name="Porwollik S."/>
            <person name="Prescott A.M."/>
            <person name="Presecan E."/>
            <person name="Pujic P."/>
            <person name="Purnelle B."/>
            <person name="Rapoport G."/>
            <person name="Rey M."/>
            <person name="Reynolds S."/>
            <person name="Rieger M."/>
            <person name="Rivolta C."/>
            <person name="Rocha E."/>
            <person name="Roche B."/>
            <person name="Rose M."/>
            <person name="Sadaie Y."/>
            <person name="Sato T."/>
            <person name="Scanlan E."/>
            <person name="Schleich S."/>
            <person name="Schroeter R."/>
            <person name="Scoffone F."/>
            <person name="Sekiguchi J."/>
            <person name="Sekowska A."/>
            <person name="Seror S.J."/>
            <person name="Serror P."/>
            <person name="Shin B.-S."/>
            <person name="Soldo B."/>
            <person name="Sorokin A."/>
            <person name="Tacconi E."/>
            <person name="Takagi T."/>
            <person name="Takahashi H."/>
            <person name="Takemaru K."/>
            <person name="Takeuchi M."/>
            <person name="Tamakoshi A."/>
            <person name="Tanaka T."/>
            <person name="Terpstra P."/>
            <person name="Tognoni A."/>
            <person name="Tosato V."/>
            <person name="Uchiyama S."/>
            <person name="Vandenbol M."/>
            <person name="Vannier F."/>
            <person name="Vassarotti A."/>
            <person name="Viari A."/>
            <person name="Wambutt R."/>
            <person name="Wedler E."/>
            <person name="Wedler H."/>
            <person name="Weitzenegger T."/>
            <person name="Winters P."/>
            <person name="Wipat A."/>
            <person name="Yamamoto H."/>
            <person name="Yamane K."/>
            <person name="Yasumoto K."/>
            <person name="Yata K."/>
            <person name="Yoshida K."/>
            <person name="Yoshikawa H.-F."/>
            <person name="Zumstein E."/>
            <person name="Yoshikawa H."/>
            <person name="Danchin A."/>
        </authorList>
    </citation>
    <scope>NUCLEOTIDE SEQUENCE [LARGE SCALE GENOMIC DNA]</scope>
    <source>
        <strain>168</strain>
    </source>
</reference>
<proteinExistence type="predicted"/>
<sequence length="49" mass="6211">MTINLFFLTLTIKKRFKSLEEFEREQQIEQIYDEMKESQLKHLYLTNWR</sequence>
<organism>
    <name type="scientific">Bacillus subtilis (strain 168)</name>
    <dbReference type="NCBI Taxonomy" id="224308"/>
    <lineage>
        <taxon>Bacteria</taxon>
        <taxon>Bacillati</taxon>
        <taxon>Bacillota</taxon>
        <taxon>Bacilli</taxon>
        <taxon>Bacillales</taxon>
        <taxon>Bacillaceae</taxon>
        <taxon>Bacillus</taxon>
    </lineage>
</organism>
<name>YRZI_BACSU</name>
<feature type="chain" id="PRO_0000049886" description="Uncharacterized protein YrzI">
    <location>
        <begin position="1"/>
        <end position="49"/>
    </location>
</feature>
<keyword id="KW-1185">Reference proteome</keyword>
<protein>
    <recommendedName>
        <fullName>Uncharacterized protein YrzI</fullName>
    </recommendedName>
</protein>
<dbReference type="EMBL" id="AL009126">
    <property type="protein sequence ID" value="CAB14661.1"/>
    <property type="molecule type" value="Genomic_DNA"/>
</dbReference>
<dbReference type="PIR" id="H69982">
    <property type="entry name" value="H69982"/>
</dbReference>
<dbReference type="RefSeq" id="NP_390597.1">
    <property type="nucleotide sequence ID" value="NC_000964.3"/>
</dbReference>
<dbReference type="RefSeq" id="WP_004399102.1">
    <property type="nucleotide sequence ID" value="NZ_OZ025638.1"/>
</dbReference>
<dbReference type="FunCoup" id="O32027">
    <property type="interactions" value="3"/>
</dbReference>
<dbReference type="STRING" id="224308.BSU27190"/>
<dbReference type="PaxDb" id="224308-BSU27190"/>
<dbReference type="EnsemblBacteria" id="CAB14661">
    <property type="protein sequence ID" value="CAB14661"/>
    <property type="gene ID" value="BSU_27190"/>
</dbReference>
<dbReference type="GeneID" id="937584"/>
<dbReference type="KEGG" id="bsu:BSU27190"/>
<dbReference type="PATRIC" id="fig|224308.179.peg.2954"/>
<dbReference type="InParanoid" id="O32027"/>
<dbReference type="BioCyc" id="BSUB:BSU27190-MONOMER"/>
<dbReference type="Proteomes" id="UP000001570">
    <property type="component" value="Chromosome"/>
</dbReference>
<dbReference type="InterPro" id="IPR012655">
    <property type="entry name" value="YrzI"/>
</dbReference>
<dbReference type="NCBIfam" id="TIGR02413">
    <property type="entry name" value="Bac_small_yrzI"/>
    <property type="match status" value="1"/>
</dbReference>
<dbReference type="Pfam" id="PF09501">
    <property type="entry name" value="Bac_small_YrzI"/>
    <property type="match status" value="1"/>
</dbReference>
<accession>O32027</accession>